<feature type="chain" id="PRO_1000201118" description="Phosphoglucosamine mutase">
    <location>
        <begin position="1"/>
        <end position="446"/>
    </location>
</feature>
<feature type="active site" description="Phosphoserine intermediate" evidence="1">
    <location>
        <position position="100"/>
    </location>
</feature>
<feature type="binding site" description="via phosphate group" evidence="1">
    <location>
        <position position="100"/>
    </location>
    <ligand>
        <name>Mg(2+)</name>
        <dbReference type="ChEBI" id="CHEBI:18420"/>
    </ligand>
</feature>
<feature type="binding site" evidence="1">
    <location>
        <position position="241"/>
    </location>
    <ligand>
        <name>Mg(2+)</name>
        <dbReference type="ChEBI" id="CHEBI:18420"/>
    </ligand>
</feature>
<feature type="binding site" evidence="1">
    <location>
        <position position="243"/>
    </location>
    <ligand>
        <name>Mg(2+)</name>
        <dbReference type="ChEBI" id="CHEBI:18420"/>
    </ligand>
</feature>
<feature type="binding site" evidence="1">
    <location>
        <position position="245"/>
    </location>
    <ligand>
        <name>Mg(2+)</name>
        <dbReference type="ChEBI" id="CHEBI:18420"/>
    </ligand>
</feature>
<feature type="modified residue" description="Phosphoserine" evidence="1">
    <location>
        <position position="100"/>
    </location>
</feature>
<sequence length="446" mass="48510">MRKHFGTDGIRGRANVVITPELALKVGQAAGVIFQRGDHRHRVVIGKDTRLSGYMIETALVAGFTSVGMDVLLLGPMPTPAVAMLTRSMRADIGVMISASHNPYEDNGIKLFGPDGFKLNDDLELEIESLIDGDMRNRLSASRDLGRAKRIESVHARYIEFAKRTLPRHVTLDGLRVVVDCANGAAYRVAPETLWELGAEVISIGVEPDGFNINHDVGSTAPETLVQKVRELRADVGIALDGDADRVLIVDEKGQKVDGDQLMAAVARSWQEDERLTQPGLVATIMSNLGLERYINSIGLTLARTAVGDRYVLEHMRQHGYNLGGEQSGHIIMSDYATTGDGLVAALQLLSVVKRRNLPVSEVCHCFEPLPQILKNVRFRSGEPLRADSVVTAIAHAKDRLGQSGRLVIRPSGTEPVIRVMAEGDDRDLVAEVVDEVVDAVTRAAA</sequence>
<keyword id="KW-0413">Isomerase</keyword>
<keyword id="KW-0460">Magnesium</keyword>
<keyword id="KW-0479">Metal-binding</keyword>
<keyword id="KW-0597">Phosphoprotein</keyword>
<comment type="function">
    <text evidence="1">Catalyzes the conversion of glucosamine-6-phosphate to glucosamine-1-phosphate.</text>
</comment>
<comment type="catalytic activity">
    <reaction evidence="1">
        <text>alpha-D-glucosamine 1-phosphate = D-glucosamine 6-phosphate</text>
        <dbReference type="Rhea" id="RHEA:23424"/>
        <dbReference type="ChEBI" id="CHEBI:58516"/>
        <dbReference type="ChEBI" id="CHEBI:58725"/>
        <dbReference type="EC" id="5.4.2.10"/>
    </reaction>
</comment>
<comment type="cofactor">
    <cofactor evidence="1">
        <name>Mg(2+)</name>
        <dbReference type="ChEBI" id="CHEBI:18420"/>
    </cofactor>
    <text evidence="1">Binds 1 Mg(2+) ion per subunit.</text>
</comment>
<comment type="PTM">
    <text evidence="1">Activated by phosphorylation.</text>
</comment>
<comment type="similarity">
    <text evidence="1">Belongs to the phosphohexose mutase family.</text>
</comment>
<evidence type="ECO:0000255" key="1">
    <source>
        <dbReference type="HAMAP-Rule" id="MF_01554"/>
    </source>
</evidence>
<name>GLMM_METEP</name>
<dbReference type="EC" id="5.4.2.10" evidence="1"/>
<dbReference type="EMBL" id="CP000908">
    <property type="protein sequence ID" value="ABY33206.1"/>
    <property type="molecule type" value="Genomic_DNA"/>
</dbReference>
<dbReference type="RefSeq" id="WP_003601519.1">
    <property type="nucleotide sequence ID" value="NC_010172.1"/>
</dbReference>
<dbReference type="SMR" id="A9W9G7"/>
<dbReference type="GeneID" id="72992570"/>
<dbReference type="KEGG" id="mex:Mext_4838"/>
<dbReference type="eggNOG" id="COG1109">
    <property type="taxonomic scope" value="Bacteria"/>
</dbReference>
<dbReference type="HOGENOM" id="CLU_016950_7_0_5"/>
<dbReference type="BioCyc" id="MEXT419610:MEXT_RS24320-MONOMER"/>
<dbReference type="GO" id="GO:0005829">
    <property type="term" value="C:cytosol"/>
    <property type="evidence" value="ECO:0007669"/>
    <property type="project" value="TreeGrafter"/>
</dbReference>
<dbReference type="GO" id="GO:0000287">
    <property type="term" value="F:magnesium ion binding"/>
    <property type="evidence" value="ECO:0007669"/>
    <property type="project" value="UniProtKB-UniRule"/>
</dbReference>
<dbReference type="GO" id="GO:0008966">
    <property type="term" value="F:phosphoglucosamine mutase activity"/>
    <property type="evidence" value="ECO:0007669"/>
    <property type="project" value="UniProtKB-UniRule"/>
</dbReference>
<dbReference type="GO" id="GO:0004615">
    <property type="term" value="F:phosphomannomutase activity"/>
    <property type="evidence" value="ECO:0007669"/>
    <property type="project" value="TreeGrafter"/>
</dbReference>
<dbReference type="GO" id="GO:0005975">
    <property type="term" value="P:carbohydrate metabolic process"/>
    <property type="evidence" value="ECO:0007669"/>
    <property type="project" value="InterPro"/>
</dbReference>
<dbReference type="GO" id="GO:0009252">
    <property type="term" value="P:peptidoglycan biosynthetic process"/>
    <property type="evidence" value="ECO:0007669"/>
    <property type="project" value="TreeGrafter"/>
</dbReference>
<dbReference type="GO" id="GO:0006048">
    <property type="term" value="P:UDP-N-acetylglucosamine biosynthetic process"/>
    <property type="evidence" value="ECO:0007669"/>
    <property type="project" value="TreeGrafter"/>
</dbReference>
<dbReference type="CDD" id="cd05802">
    <property type="entry name" value="GlmM"/>
    <property type="match status" value="1"/>
</dbReference>
<dbReference type="FunFam" id="3.30.310.50:FF:000001">
    <property type="entry name" value="Phosphoglucosamine mutase"/>
    <property type="match status" value="1"/>
</dbReference>
<dbReference type="FunFam" id="3.40.120.10:FF:000001">
    <property type="entry name" value="Phosphoglucosamine mutase"/>
    <property type="match status" value="1"/>
</dbReference>
<dbReference type="FunFam" id="3.40.120.10:FF:000002">
    <property type="entry name" value="Phosphoglucosamine mutase"/>
    <property type="match status" value="1"/>
</dbReference>
<dbReference type="Gene3D" id="3.40.120.10">
    <property type="entry name" value="Alpha-D-Glucose-1,6-Bisphosphate, subunit A, domain 3"/>
    <property type="match status" value="3"/>
</dbReference>
<dbReference type="Gene3D" id="3.30.310.50">
    <property type="entry name" value="Alpha-D-phosphohexomutase, C-terminal domain"/>
    <property type="match status" value="1"/>
</dbReference>
<dbReference type="HAMAP" id="MF_01554_B">
    <property type="entry name" value="GlmM_B"/>
    <property type="match status" value="1"/>
</dbReference>
<dbReference type="InterPro" id="IPR005844">
    <property type="entry name" value="A-D-PHexomutase_a/b/a-I"/>
</dbReference>
<dbReference type="InterPro" id="IPR016055">
    <property type="entry name" value="A-D-PHexomutase_a/b/a-I/II/III"/>
</dbReference>
<dbReference type="InterPro" id="IPR005845">
    <property type="entry name" value="A-D-PHexomutase_a/b/a-II"/>
</dbReference>
<dbReference type="InterPro" id="IPR005846">
    <property type="entry name" value="A-D-PHexomutase_a/b/a-III"/>
</dbReference>
<dbReference type="InterPro" id="IPR005843">
    <property type="entry name" value="A-D-PHexomutase_C"/>
</dbReference>
<dbReference type="InterPro" id="IPR036900">
    <property type="entry name" value="A-D-PHexomutase_C_sf"/>
</dbReference>
<dbReference type="InterPro" id="IPR016066">
    <property type="entry name" value="A-D-PHexomutase_CS"/>
</dbReference>
<dbReference type="InterPro" id="IPR005841">
    <property type="entry name" value="Alpha-D-phosphohexomutase_SF"/>
</dbReference>
<dbReference type="InterPro" id="IPR006352">
    <property type="entry name" value="GlmM_bact"/>
</dbReference>
<dbReference type="InterPro" id="IPR050060">
    <property type="entry name" value="Phosphoglucosamine_mutase"/>
</dbReference>
<dbReference type="NCBIfam" id="TIGR01455">
    <property type="entry name" value="glmM"/>
    <property type="match status" value="1"/>
</dbReference>
<dbReference type="NCBIfam" id="NF008139">
    <property type="entry name" value="PRK10887.1"/>
    <property type="match status" value="1"/>
</dbReference>
<dbReference type="PANTHER" id="PTHR42946:SF1">
    <property type="entry name" value="PHOSPHOGLUCOMUTASE (ALPHA-D-GLUCOSE-1,6-BISPHOSPHATE-DEPENDENT)"/>
    <property type="match status" value="1"/>
</dbReference>
<dbReference type="PANTHER" id="PTHR42946">
    <property type="entry name" value="PHOSPHOHEXOSE MUTASE"/>
    <property type="match status" value="1"/>
</dbReference>
<dbReference type="Pfam" id="PF02878">
    <property type="entry name" value="PGM_PMM_I"/>
    <property type="match status" value="1"/>
</dbReference>
<dbReference type="Pfam" id="PF02879">
    <property type="entry name" value="PGM_PMM_II"/>
    <property type="match status" value="1"/>
</dbReference>
<dbReference type="Pfam" id="PF02880">
    <property type="entry name" value="PGM_PMM_III"/>
    <property type="match status" value="1"/>
</dbReference>
<dbReference type="Pfam" id="PF00408">
    <property type="entry name" value="PGM_PMM_IV"/>
    <property type="match status" value="1"/>
</dbReference>
<dbReference type="PRINTS" id="PR00509">
    <property type="entry name" value="PGMPMM"/>
</dbReference>
<dbReference type="SUPFAM" id="SSF55957">
    <property type="entry name" value="Phosphoglucomutase, C-terminal domain"/>
    <property type="match status" value="1"/>
</dbReference>
<dbReference type="SUPFAM" id="SSF53738">
    <property type="entry name" value="Phosphoglucomutase, first 3 domains"/>
    <property type="match status" value="3"/>
</dbReference>
<dbReference type="PROSITE" id="PS00710">
    <property type="entry name" value="PGM_PMM"/>
    <property type="match status" value="1"/>
</dbReference>
<gene>
    <name evidence="1" type="primary">glmM</name>
    <name type="ordered locus">Mext_4838</name>
</gene>
<proteinExistence type="inferred from homology"/>
<organism>
    <name type="scientific">Methylorubrum extorquens (strain PA1)</name>
    <name type="common">Methylobacterium extorquens</name>
    <dbReference type="NCBI Taxonomy" id="419610"/>
    <lineage>
        <taxon>Bacteria</taxon>
        <taxon>Pseudomonadati</taxon>
        <taxon>Pseudomonadota</taxon>
        <taxon>Alphaproteobacteria</taxon>
        <taxon>Hyphomicrobiales</taxon>
        <taxon>Methylobacteriaceae</taxon>
        <taxon>Methylorubrum</taxon>
    </lineage>
</organism>
<reference key="1">
    <citation type="submission" date="2007-12" db="EMBL/GenBank/DDBJ databases">
        <title>Complete sequence of Methylobacterium extorquens PA1.</title>
        <authorList>
            <consortium name="US DOE Joint Genome Institute"/>
            <person name="Copeland A."/>
            <person name="Lucas S."/>
            <person name="Lapidus A."/>
            <person name="Barry K."/>
            <person name="Glavina del Rio T."/>
            <person name="Dalin E."/>
            <person name="Tice H."/>
            <person name="Pitluck S."/>
            <person name="Saunders E."/>
            <person name="Brettin T."/>
            <person name="Bruce D."/>
            <person name="Detter J.C."/>
            <person name="Han C."/>
            <person name="Schmutz J."/>
            <person name="Larimer F."/>
            <person name="Land M."/>
            <person name="Hauser L."/>
            <person name="Kyrpides N."/>
            <person name="Kim E."/>
            <person name="Marx C."/>
            <person name="Richardson P."/>
        </authorList>
    </citation>
    <scope>NUCLEOTIDE SEQUENCE [LARGE SCALE GENOMIC DNA]</scope>
    <source>
        <strain>PA1</strain>
    </source>
</reference>
<accession>A9W9G7</accession>
<protein>
    <recommendedName>
        <fullName evidence="1">Phosphoglucosamine mutase</fullName>
        <ecNumber evidence="1">5.4.2.10</ecNumber>
    </recommendedName>
</protein>